<evidence type="ECO:0000250" key="1"/>
<evidence type="ECO:0000305" key="2"/>
<organism>
    <name type="scientific">Mesorhizobium japonicum (strain LMG 29417 / CECT 9101 / MAFF 303099)</name>
    <name type="common">Mesorhizobium loti (strain MAFF 303099)</name>
    <dbReference type="NCBI Taxonomy" id="266835"/>
    <lineage>
        <taxon>Bacteria</taxon>
        <taxon>Pseudomonadati</taxon>
        <taxon>Pseudomonadota</taxon>
        <taxon>Alphaproteobacteria</taxon>
        <taxon>Hyphomicrobiales</taxon>
        <taxon>Phyllobacteriaceae</taxon>
        <taxon>Mesorhizobium</taxon>
    </lineage>
</organism>
<accession>Q984S9</accession>
<dbReference type="EC" id="2.7.4.8"/>
<dbReference type="EMBL" id="BA000012">
    <property type="protein sequence ID" value="BAB54234.1"/>
    <property type="status" value="ALT_INIT"/>
    <property type="molecule type" value="Genomic_DNA"/>
</dbReference>
<dbReference type="RefSeq" id="WP_027053294.1">
    <property type="nucleotide sequence ID" value="NC_002678.2"/>
</dbReference>
<dbReference type="SMR" id="Q984S9"/>
<dbReference type="GeneID" id="66684942"/>
<dbReference type="KEGG" id="mlo:mlr7857"/>
<dbReference type="eggNOG" id="COG0194">
    <property type="taxonomic scope" value="Bacteria"/>
</dbReference>
<dbReference type="HOGENOM" id="CLU_001715_1_0_5"/>
<dbReference type="Proteomes" id="UP000000552">
    <property type="component" value="Chromosome"/>
</dbReference>
<dbReference type="GO" id="GO:0005829">
    <property type="term" value="C:cytosol"/>
    <property type="evidence" value="ECO:0007669"/>
    <property type="project" value="TreeGrafter"/>
</dbReference>
<dbReference type="GO" id="GO:0005524">
    <property type="term" value="F:ATP binding"/>
    <property type="evidence" value="ECO:0007669"/>
    <property type="project" value="UniProtKB-UniRule"/>
</dbReference>
<dbReference type="GO" id="GO:0004385">
    <property type="term" value="F:guanylate kinase activity"/>
    <property type="evidence" value="ECO:0007669"/>
    <property type="project" value="UniProtKB-UniRule"/>
</dbReference>
<dbReference type="CDD" id="cd00071">
    <property type="entry name" value="GMPK"/>
    <property type="match status" value="1"/>
</dbReference>
<dbReference type="CDD" id="cd00133">
    <property type="entry name" value="PTS_IIB"/>
    <property type="match status" value="1"/>
</dbReference>
<dbReference type="FunFam" id="3.30.63.10:FF:000002">
    <property type="entry name" value="Guanylate kinase 1"/>
    <property type="match status" value="1"/>
</dbReference>
<dbReference type="Gene3D" id="3.30.63.10">
    <property type="entry name" value="Guanylate Kinase phosphate binding domain"/>
    <property type="match status" value="1"/>
</dbReference>
<dbReference type="Gene3D" id="3.40.50.300">
    <property type="entry name" value="P-loop containing nucleotide triphosphate hydrolases"/>
    <property type="match status" value="1"/>
</dbReference>
<dbReference type="HAMAP" id="MF_00328">
    <property type="entry name" value="Guanylate_kinase"/>
    <property type="match status" value="1"/>
</dbReference>
<dbReference type="InterPro" id="IPR008145">
    <property type="entry name" value="GK/Ca_channel_bsu"/>
</dbReference>
<dbReference type="InterPro" id="IPR008144">
    <property type="entry name" value="Guanylate_kin-like_dom"/>
</dbReference>
<dbReference type="InterPro" id="IPR017665">
    <property type="entry name" value="Guanylate_kinase"/>
</dbReference>
<dbReference type="InterPro" id="IPR020590">
    <property type="entry name" value="Guanylate_kinase_CS"/>
</dbReference>
<dbReference type="InterPro" id="IPR027417">
    <property type="entry name" value="P-loop_NTPase"/>
</dbReference>
<dbReference type="NCBIfam" id="TIGR03263">
    <property type="entry name" value="guanyl_kin"/>
    <property type="match status" value="1"/>
</dbReference>
<dbReference type="PANTHER" id="PTHR23117:SF13">
    <property type="entry name" value="GUANYLATE KINASE"/>
    <property type="match status" value="1"/>
</dbReference>
<dbReference type="PANTHER" id="PTHR23117">
    <property type="entry name" value="GUANYLATE KINASE-RELATED"/>
    <property type="match status" value="1"/>
</dbReference>
<dbReference type="Pfam" id="PF00625">
    <property type="entry name" value="Guanylate_kin"/>
    <property type="match status" value="1"/>
</dbReference>
<dbReference type="SMART" id="SM00072">
    <property type="entry name" value="GuKc"/>
    <property type="match status" value="1"/>
</dbReference>
<dbReference type="SUPFAM" id="SSF52540">
    <property type="entry name" value="P-loop containing nucleoside triphosphate hydrolases"/>
    <property type="match status" value="1"/>
</dbReference>
<dbReference type="PROSITE" id="PS00856">
    <property type="entry name" value="GUANYLATE_KINASE_1"/>
    <property type="match status" value="1"/>
</dbReference>
<dbReference type="PROSITE" id="PS50052">
    <property type="entry name" value="GUANYLATE_KINASE_2"/>
    <property type="match status" value="1"/>
</dbReference>
<feature type="chain" id="PRO_0000170591" description="Guanylate kinase">
    <location>
        <begin position="1"/>
        <end position="218"/>
    </location>
</feature>
<feature type="domain" description="Guanylate kinase-like">
    <location>
        <begin position="14"/>
        <end position="193"/>
    </location>
</feature>
<feature type="binding site" evidence="1">
    <location>
        <begin position="21"/>
        <end position="28"/>
    </location>
    <ligand>
        <name>ATP</name>
        <dbReference type="ChEBI" id="CHEBI:30616"/>
    </ligand>
</feature>
<keyword id="KW-0067">ATP-binding</keyword>
<keyword id="KW-0963">Cytoplasm</keyword>
<keyword id="KW-0418">Kinase</keyword>
<keyword id="KW-0547">Nucleotide-binding</keyword>
<keyword id="KW-0808">Transferase</keyword>
<gene>
    <name type="primary">gmk</name>
    <name type="ordered locus">mlr7857</name>
</gene>
<proteinExistence type="inferred from homology"/>
<sequence>MVPRDLGSRIRRRGLMLVLSSPSGAGKSTIARNLLESDSSLELSVSVTTRPRRGSEIEGVHYHFRTMREFERLRDSDALLEWAEVHGNCYATPREPAELALAQGRDMLFDIDWQGAQQLKEKMRADIVSIFILPPSMKELKARLKRRAEDQEAVIETRLKNARNEIEHWKEYDFVIVNDDLDRAFAEVRGIVVAERLRRDRRPGLFDFVSGLLDEKTV</sequence>
<name>KGUA_RHILO</name>
<comment type="function">
    <text evidence="1">Essential for recycling GMP and indirectly, cGMP.</text>
</comment>
<comment type="catalytic activity">
    <reaction>
        <text>GMP + ATP = GDP + ADP</text>
        <dbReference type="Rhea" id="RHEA:20780"/>
        <dbReference type="ChEBI" id="CHEBI:30616"/>
        <dbReference type="ChEBI" id="CHEBI:58115"/>
        <dbReference type="ChEBI" id="CHEBI:58189"/>
        <dbReference type="ChEBI" id="CHEBI:456216"/>
        <dbReference type="EC" id="2.7.4.8"/>
    </reaction>
</comment>
<comment type="subcellular location">
    <subcellularLocation>
        <location evidence="1">Cytoplasm</location>
    </subcellularLocation>
</comment>
<comment type="similarity">
    <text evidence="2">Belongs to the guanylate kinase family.</text>
</comment>
<comment type="sequence caution" evidence="2">
    <conflict type="erroneous initiation">
        <sequence resource="EMBL-CDS" id="BAB54234"/>
    </conflict>
</comment>
<protein>
    <recommendedName>
        <fullName>Guanylate kinase</fullName>
        <ecNumber>2.7.4.8</ecNumber>
    </recommendedName>
    <alternativeName>
        <fullName>GMP kinase</fullName>
    </alternativeName>
</protein>
<reference key="1">
    <citation type="journal article" date="2000" name="DNA Res.">
        <title>Complete genome structure of the nitrogen-fixing symbiotic bacterium Mesorhizobium loti.</title>
        <authorList>
            <person name="Kaneko T."/>
            <person name="Nakamura Y."/>
            <person name="Sato S."/>
            <person name="Asamizu E."/>
            <person name="Kato T."/>
            <person name="Sasamoto S."/>
            <person name="Watanabe A."/>
            <person name="Idesawa K."/>
            <person name="Ishikawa A."/>
            <person name="Kawashima K."/>
            <person name="Kimura T."/>
            <person name="Kishida Y."/>
            <person name="Kiyokawa C."/>
            <person name="Kohara M."/>
            <person name="Matsumoto M."/>
            <person name="Matsuno A."/>
            <person name="Mochizuki Y."/>
            <person name="Nakayama S."/>
            <person name="Nakazaki N."/>
            <person name="Shimpo S."/>
            <person name="Sugimoto M."/>
            <person name="Takeuchi C."/>
            <person name="Yamada M."/>
            <person name="Tabata S."/>
        </authorList>
    </citation>
    <scope>NUCLEOTIDE SEQUENCE [LARGE SCALE GENOMIC DNA]</scope>
    <source>
        <strain>LMG 29417 / CECT 9101 / MAFF 303099</strain>
    </source>
</reference>